<gene>
    <name evidence="1" type="primary">tatB</name>
    <name type="ordered locus">Aave_1054</name>
</gene>
<protein>
    <recommendedName>
        <fullName evidence="1">Sec-independent protein translocase protein TatB</fullName>
    </recommendedName>
</protein>
<keyword id="KW-0997">Cell inner membrane</keyword>
<keyword id="KW-1003">Cell membrane</keyword>
<keyword id="KW-0472">Membrane</keyword>
<keyword id="KW-0653">Protein transport</keyword>
<keyword id="KW-0811">Translocation</keyword>
<keyword id="KW-0812">Transmembrane</keyword>
<keyword id="KW-1133">Transmembrane helix</keyword>
<keyword id="KW-0813">Transport</keyword>
<comment type="function">
    <text evidence="1">Part of the twin-arginine translocation (Tat) system that transports large folded proteins containing a characteristic twin-arginine motif in their signal peptide across membranes. Together with TatC, TatB is part of a receptor directly interacting with Tat signal peptides. TatB may form an oligomeric binding site that transiently accommodates folded Tat precursor proteins before their translocation.</text>
</comment>
<comment type="subunit">
    <text evidence="1">The Tat system comprises two distinct complexes: a TatABC complex, containing multiple copies of TatA, TatB and TatC subunits, and a separate TatA complex, containing only TatA subunits. Substrates initially bind to the TatABC complex, which probably triggers association of the separate TatA complex to form the active translocon.</text>
</comment>
<comment type="subcellular location">
    <subcellularLocation>
        <location evidence="1">Cell inner membrane</location>
        <topology evidence="1">Single-pass membrane protein</topology>
    </subcellularLocation>
</comment>
<comment type="similarity">
    <text evidence="1">Belongs to the TatB family.</text>
</comment>
<name>TATB_PARC0</name>
<dbReference type="EMBL" id="CP000512">
    <property type="protein sequence ID" value="ABM31651.1"/>
    <property type="molecule type" value="Genomic_DNA"/>
</dbReference>
<dbReference type="RefSeq" id="WP_011794209.1">
    <property type="nucleotide sequence ID" value="NC_008752.1"/>
</dbReference>
<dbReference type="SMR" id="A1TL13"/>
<dbReference type="STRING" id="397945.Aave_1054"/>
<dbReference type="GeneID" id="79790709"/>
<dbReference type="KEGG" id="aav:Aave_1054"/>
<dbReference type="eggNOG" id="COG1826">
    <property type="taxonomic scope" value="Bacteria"/>
</dbReference>
<dbReference type="HOGENOM" id="CLU_086034_1_1_4"/>
<dbReference type="OrthoDB" id="9816005at2"/>
<dbReference type="Proteomes" id="UP000002596">
    <property type="component" value="Chromosome"/>
</dbReference>
<dbReference type="GO" id="GO:0033281">
    <property type="term" value="C:TAT protein transport complex"/>
    <property type="evidence" value="ECO:0007669"/>
    <property type="project" value="UniProtKB-UniRule"/>
</dbReference>
<dbReference type="GO" id="GO:0008320">
    <property type="term" value="F:protein transmembrane transporter activity"/>
    <property type="evidence" value="ECO:0007669"/>
    <property type="project" value="UniProtKB-UniRule"/>
</dbReference>
<dbReference type="GO" id="GO:0043953">
    <property type="term" value="P:protein transport by the Tat complex"/>
    <property type="evidence" value="ECO:0007669"/>
    <property type="project" value="UniProtKB-UniRule"/>
</dbReference>
<dbReference type="Gene3D" id="1.20.5.3310">
    <property type="match status" value="1"/>
</dbReference>
<dbReference type="HAMAP" id="MF_00237">
    <property type="entry name" value="TatB"/>
    <property type="match status" value="1"/>
</dbReference>
<dbReference type="InterPro" id="IPR003369">
    <property type="entry name" value="TatA/B/E"/>
</dbReference>
<dbReference type="InterPro" id="IPR018448">
    <property type="entry name" value="TatB"/>
</dbReference>
<dbReference type="NCBIfam" id="TIGR01410">
    <property type="entry name" value="tatB"/>
    <property type="match status" value="1"/>
</dbReference>
<dbReference type="PANTHER" id="PTHR33162">
    <property type="entry name" value="SEC-INDEPENDENT PROTEIN TRANSLOCASE PROTEIN TATA, CHLOROPLASTIC"/>
    <property type="match status" value="1"/>
</dbReference>
<dbReference type="PANTHER" id="PTHR33162:SF1">
    <property type="entry name" value="SEC-INDEPENDENT PROTEIN TRANSLOCASE PROTEIN TATA, CHLOROPLASTIC"/>
    <property type="match status" value="1"/>
</dbReference>
<dbReference type="Pfam" id="PF02416">
    <property type="entry name" value="TatA_B_E"/>
    <property type="match status" value="1"/>
</dbReference>
<dbReference type="PRINTS" id="PR01506">
    <property type="entry name" value="TATBPROTEIN"/>
</dbReference>
<accession>A1TL13</accession>
<reference key="1">
    <citation type="submission" date="2006-12" db="EMBL/GenBank/DDBJ databases">
        <title>Complete sequence of Acidovorax avenae subsp. citrulli AAC00-1.</title>
        <authorList>
            <person name="Copeland A."/>
            <person name="Lucas S."/>
            <person name="Lapidus A."/>
            <person name="Barry K."/>
            <person name="Detter J.C."/>
            <person name="Glavina del Rio T."/>
            <person name="Dalin E."/>
            <person name="Tice H."/>
            <person name="Pitluck S."/>
            <person name="Kiss H."/>
            <person name="Brettin T."/>
            <person name="Bruce D."/>
            <person name="Han C."/>
            <person name="Tapia R."/>
            <person name="Gilna P."/>
            <person name="Schmutz J."/>
            <person name="Larimer F."/>
            <person name="Land M."/>
            <person name="Hauser L."/>
            <person name="Kyrpides N."/>
            <person name="Kim E."/>
            <person name="Stahl D."/>
            <person name="Richardson P."/>
        </authorList>
    </citation>
    <scope>NUCLEOTIDE SEQUENCE [LARGE SCALE GENOMIC DNA]</scope>
    <source>
        <strain>AAC00-1</strain>
    </source>
</reference>
<feature type="chain" id="PRO_0000301132" description="Sec-independent protein translocase protein TatB">
    <location>
        <begin position="1"/>
        <end position="164"/>
    </location>
</feature>
<feature type="transmembrane region" description="Helical" evidence="1">
    <location>
        <begin position="1"/>
        <end position="21"/>
    </location>
</feature>
<feature type="region of interest" description="Disordered" evidence="2">
    <location>
        <begin position="81"/>
        <end position="102"/>
    </location>
</feature>
<proteinExistence type="inferred from homology"/>
<sequence>MIDIGLSKMALIGAVALIVIGPEKLPRVARTVGTLLGKAQRYVADVKAEVNRSMELDELRKMKDTVETAARDVHHSFQTHASEFQKDWESGTSDAAATGHDGILDPAALEGPSSRIVPTYKHPGKNWRLKRSATPQWYKARAGVRTKAQSGAARVARFRPRKFQ</sequence>
<organism>
    <name type="scientific">Paracidovorax citrulli (strain AAC00-1)</name>
    <name type="common">Acidovorax citrulli</name>
    <dbReference type="NCBI Taxonomy" id="397945"/>
    <lineage>
        <taxon>Bacteria</taxon>
        <taxon>Pseudomonadati</taxon>
        <taxon>Pseudomonadota</taxon>
        <taxon>Betaproteobacteria</taxon>
        <taxon>Burkholderiales</taxon>
        <taxon>Comamonadaceae</taxon>
        <taxon>Paracidovorax</taxon>
    </lineage>
</organism>
<evidence type="ECO:0000255" key="1">
    <source>
        <dbReference type="HAMAP-Rule" id="MF_00237"/>
    </source>
</evidence>
<evidence type="ECO:0000256" key="2">
    <source>
        <dbReference type="SAM" id="MobiDB-lite"/>
    </source>
</evidence>